<evidence type="ECO:0000255" key="1">
    <source>
        <dbReference type="HAMAP-Rule" id="MF_00252"/>
    </source>
</evidence>
<name>SYK_AYWBP</name>
<accession>Q2NJZ8</accession>
<reference key="1">
    <citation type="journal article" date="2006" name="J. Bacteriol.">
        <title>Living with genome instability: the adaptation of phytoplasmas to diverse environments of their insect and plant hosts.</title>
        <authorList>
            <person name="Bai X."/>
            <person name="Zhang J."/>
            <person name="Ewing A."/>
            <person name="Miller S.A."/>
            <person name="Jancso Radek A."/>
            <person name="Shevchenko D.V."/>
            <person name="Tsukerman K."/>
            <person name="Walunas T."/>
            <person name="Lapidus A."/>
            <person name="Campbell J.W."/>
            <person name="Hogenhout S.A."/>
        </authorList>
    </citation>
    <scope>NUCLEOTIDE SEQUENCE [LARGE SCALE GENOMIC DNA]</scope>
    <source>
        <strain>AYWB</strain>
    </source>
</reference>
<proteinExistence type="inferred from homology"/>
<protein>
    <recommendedName>
        <fullName evidence="1">Lysine--tRNA ligase</fullName>
        <ecNumber evidence="1">6.1.1.6</ecNumber>
    </recommendedName>
    <alternativeName>
        <fullName evidence="1">Lysyl-tRNA synthetase</fullName>
        <shortName evidence="1">LysRS</shortName>
    </alternativeName>
</protein>
<organism>
    <name type="scientific">Aster yellows witches'-broom phytoplasma (strain AYWB)</name>
    <dbReference type="NCBI Taxonomy" id="322098"/>
    <lineage>
        <taxon>Bacteria</taxon>
        <taxon>Bacillati</taxon>
        <taxon>Mycoplasmatota</taxon>
        <taxon>Mollicutes</taxon>
        <taxon>Acholeplasmatales</taxon>
        <taxon>Acholeplasmataceae</taxon>
        <taxon>Candidatus Phytoplasma</taxon>
        <taxon>16SrI (Aster yellows group)</taxon>
    </lineage>
</organism>
<keyword id="KW-0030">Aminoacyl-tRNA synthetase</keyword>
<keyword id="KW-0067">ATP-binding</keyword>
<keyword id="KW-0963">Cytoplasm</keyword>
<keyword id="KW-0436">Ligase</keyword>
<keyword id="KW-0460">Magnesium</keyword>
<keyword id="KW-0479">Metal-binding</keyword>
<keyword id="KW-0547">Nucleotide-binding</keyword>
<keyword id="KW-0648">Protein biosynthesis</keyword>
<dbReference type="EC" id="6.1.1.6" evidence="1"/>
<dbReference type="EMBL" id="CP000061">
    <property type="protein sequence ID" value="ABC65245.1"/>
    <property type="molecule type" value="Genomic_DNA"/>
</dbReference>
<dbReference type="RefSeq" id="WP_011412411.1">
    <property type="nucleotide sequence ID" value="NC_007716.1"/>
</dbReference>
<dbReference type="SMR" id="Q2NJZ8"/>
<dbReference type="STRING" id="322098.AYWB_128"/>
<dbReference type="KEGG" id="ayw:AYWB_128"/>
<dbReference type="eggNOG" id="COG1190">
    <property type="taxonomic scope" value="Bacteria"/>
</dbReference>
<dbReference type="HOGENOM" id="CLU_008255_6_0_14"/>
<dbReference type="OrthoDB" id="9801152at2"/>
<dbReference type="PhylomeDB" id="Q2NJZ8"/>
<dbReference type="Proteomes" id="UP000001934">
    <property type="component" value="Chromosome"/>
</dbReference>
<dbReference type="GO" id="GO:0005829">
    <property type="term" value="C:cytosol"/>
    <property type="evidence" value="ECO:0007669"/>
    <property type="project" value="TreeGrafter"/>
</dbReference>
<dbReference type="GO" id="GO:0005524">
    <property type="term" value="F:ATP binding"/>
    <property type="evidence" value="ECO:0007669"/>
    <property type="project" value="UniProtKB-UniRule"/>
</dbReference>
<dbReference type="GO" id="GO:0004824">
    <property type="term" value="F:lysine-tRNA ligase activity"/>
    <property type="evidence" value="ECO:0007669"/>
    <property type="project" value="UniProtKB-UniRule"/>
</dbReference>
<dbReference type="GO" id="GO:0000287">
    <property type="term" value="F:magnesium ion binding"/>
    <property type="evidence" value="ECO:0007669"/>
    <property type="project" value="UniProtKB-UniRule"/>
</dbReference>
<dbReference type="GO" id="GO:0000049">
    <property type="term" value="F:tRNA binding"/>
    <property type="evidence" value="ECO:0007669"/>
    <property type="project" value="TreeGrafter"/>
</dbReference>
<dbReference type="GO" id="GO:0006430">
    <property type="term" value="P:lysyl-tRNA aminoacylation"/>
    <property type="evidence" value="ECO:0007669"/>
    <property type="project" value="UniProtKB-UniRule"/>
</dbReference>
<dbReference type="CDD" id="cd00775">
    <property type="entry name" value="LysRS_core"/>
    <property type="match status" value="1"/>
</dbReference>
<dbReference type="CDD" id="cd04322">
    <property type="entry name" value="LysRS_N"/>
    <property type="match status" value="1"/>
</dbReference>
<dbReference type="FunFam" id="2.40.50.140:FF:000024">
    <property type="entry name" value="Lysine--tRNA ligase"/>
    <property type="match status" value="1"/>
</dbReference>
<dbReference type="Gene3D" id="3.30.930.10">
    <property type="entry name" value="Bira Bifunctional Protein, Domain 2"/>
    <property type="match status" value="1"/>
</dbReference>
<dbReference type="Gene3D" id="2.40.50.140">
    <property type="entry name" value="Nucleic acid-binding proteins"/>
    <property type="match status" value="1"/>
</dbReference>
<dbReference type="HAMAP" id="MF_00252">
    <property type="entry name" value="Lys_tRNA_synth_class2"/>
    <property type="match status" value="1"/>
</dbReference>
<dbReference type="InterPro" id="IPR004364">
    <property type="entry name" value="Aa-tRNA-synt_II"/>
</dbReference>
<dbReference type="InterPro" id="IPR006195">
    <property type="entry name" value="aa-tRNA-synth_II"/>
</dbReference>
<dbReference type="InterPro" id="IPR045864">
    <property type="entry name" value="aa-tRNA-synth_II/BPL/LPL"/>
</dbReference>
<dbReference type="InterPro" id="IPR002313">
    <property type="entry name" value="Lys-tRNA-ligase_II"/>
</dbReference>
<dbReference type="InterPro" id="IPR044136">
    <property type="entry name" value="Lys-tRNA-ligase_II_N"/>
</dbReference>
<dbReference type="InterPro" id="IPR018149">
    <property type="entry name" value="Lys-tRNA-synth_II_C"/>
</dbReference>
<dbReference type="InterPro" id="IPR012340">
    <property type="entry name" value="NA-bd_OB-fold"/>
</dbReference>
<dbReference type="InterPro" id="IPR004365">
    <property type="entry name" value="NA-bd_OB_tRNA"/>
</dbReference>
<dbReference type="NCBIfam" id="TIGR00499">
    <property type="entry name" value="lysS_bact"/>
    <property type="match status" value="1"/>
</dbReference>
<dbReference type="NCBIfam" id="NF001756">
    <property type="entry name" value="PRK00484.1"/>
    <property type="match status" value="1"/>
</dbReference>
<dbReference type="PANTHER" id="PTHR42918:SF15">
    <property type="entry name" value="LYSINE--TRNA LIGASE, CHLOROPLASTIC_MITOCHONDRIAL"/>
    <property type="match status" value="1"/>
</dbReference>
<dbReference type="PANTHER" id="PTHR42918">
    <property type="entry name" value="LYSYL-TRNA SYNTHETASE"/>
    <property type="match status" value="1"/>
</dbReference>
<dbReference type="Pfam" id="PF00152">
    <property type="entry name" value="tRNA-synt_2"/>
    <property type="match status" value="1"/>
</dbReference>
<dbReference type="Pfam" id="PF01336">
    <property type="entry name" value="tRNA_anti-codon"/>
    <property type="match status" value="1"/>
</dbReference>
<dbReference type="PRINTS" id="PR00982">
    <property type="entry name" value="TRNASYNTHLYS"/>
</dbReference>
<dbReference type="SUPFAM" id="SSF55681">
    <property type="entry name" value="Class II aaRS and biotin synthetases"/>
    <property type="match status" value="1"/>
</dbReference>
<dbReference type="SUPFAM" id="SSF50249">
    <property type="entry name" value="Nucleic acid-binding proteins"/>
    <property type="match status" value="1"/>
</dbReference>
<dbReference type="PROSITE" id="PS50862">
    <property type="entry name" value="AA_TRNA_LIGASE_II"/>
    <property type="match status" value="1"/>
</dbReference>
<comment type="catalytic activity">
    <reaction evidence="1">
        <text>tRNA(Lys) + L-lysine + ATP = L-lysyl-tRNA(Lys) + AMP + diphosphate</text>
        <dbReference type="Rhea" id="RHEA:20792"/>
        <dbReference type="Rhea" id="RHEA-COMP:9696"/>
        <dbReference type="Rhea" id="RHEA-COMP:9697"/>
        <dbReference type="ChEBI" id="CHEBI:30616"/>
        <dbReference type="ChEBI" id="CHEBI:32551"/>
        <dbReference type="ChEBI" id="CHEBI:33019"/>
        <dbReference type="ChEBI" id="CHEBI:78442"/>
        <dbReference type="ChEBI" id="CHEBI:78529"/>
        <dbReference type="ChEBI" id="CHEBI:456215"/>
        <dbReference type="EC" id="6.1.1.6"/>
    </reaction>
</comment>
<comment type="cofactor">
    <cofactor evidence="1">
        <name>Mg(2+)</name>
        <dbReference type="ChEBI" id="CHEBI:18420"/>
    </cofactor>
    <text evidence="1">Binds 3 Mg(2+) ions per subunit.</text>
</comment>
<comment type="subunit">
    <text evidence="1">Homodimer.</text>
</comment>
<comment type="subcellular location">
    <subcellularLocation>
        <location evidence="1">Cytoplasm</location>
    </subcellularLocation>
</comment>
<comment type="similarity">
    <text evidence="1">Belongs to the class-II aminoacyl-tRNA synthetase family.</text>
</comment>
<gene>
    <name evidence="1" type="primary">lysS</name>
    <name type="ordered locus">AYWB_128</name>
</gene>
<feature type="chain" id="PRO_1000199237" description="Lysine--tRNA ligase">
    <location>
        <begin position="1"/>
        <end position="496"/>
    </location>
</feature>
<feature type="binding site" evidence="1">
    <location>
        <position position="403"/>
    </location>
    <ligand>
        <name>Mg(2+)</name>
        <dbReference type="ChEBI" id="CHEBI:18420"/>
        <label>1</label>
    </ligand>
</feature>
<feature type="binding site" evidence="1">
    <location>
        <position position="410"/>
    </location>
    <ligand>
        <name>Mg(2+)</name>
        <dbReference type="ChEBI" id="CHEBI:18420"/>
        <label>1</label>
    </ligand>
</feature>
<feature type="binding site" evidence="1">
    <location>
        <position position="410"/>
    </location>
    <ligand>
        <name>Mg(2+)</name>
        <dbReference type="ChEBI" id="CHEBI:18420"/>
        <label>2</label>
    </ligand>
</feature>
<sequence length="496" mass="57330">MKKKISEQEIIRHQKMNELKKINIDPFGKKIVPSHSIKQIILQYQKEDSLAFEQSQINVCVAGRIVLKRGQGKAGFLHLQDFDFRIQAYVKLDLVGKDAFQIYQNCDLGDIIGIKGFLFKTKTQELTIKALEFIHLTKALKPLPDKFHGLQNREDMRKKRYVDLIVNEKTRQVFLTRSLIMKYIRNFFDNQGFLEVETPILQPTLGGASAKPFITHHNALNCDFYLRIATELPLKKLIVGGMNKVYEIGRLFRNEGIDATHNPEFSTIEAYLAYADMQDIMDLTKQCLQELVQKIFGKLQFTYQNQEIDFSHFAKVSMVASIKEKTGIDFTDHFTLEQCLSLAKKHKIEVMPHFSQGHIIEAFFGKYVENALIQPTFVYGHPLEISPLAKQNEFDPRFTDRFELFIVGKEFANAFRELNDPIEQEKRFLNQLKQKQLGNEEANDMDYDFLNALNYGMPPTGGLGMGIDRLVMLLTDTANIRDVILFPHCKNQNKFI</sequence>